<organism>
    <name type="scientific">Porcine adenovirus A serotype 3</name>
    <name type="common">PAdV-3</name>
    <name type="synonym">Porcine adenovirus 3</name>
    <dbReference type="NCBI Taxonomy" id="35265"/>
    <lineage>
        <taxon>Viruses</taxon>
        <taxon>Varidnaviria</taxon>
        <taxon>Bamfordvirae</taxon>
        <taxon>Preplasmiviricota</taxon>
        <taxon>Tectiliviricetes</taxon>
        <taxon>Rowavirales</taxon>
        <taxon>Adenoviridae</taxon>
        <taxon>Mastadenovirus</taxon>
        <taxon>Mastadenovirus porcustertium</taxon>
    </lineage>
</organism>
<gene>
    <name evidence="1" type="primary">L4</name>
</gene>
<name>CAP8_ADEP3</name>
<accession>Q83453</accession>
<accession>Q9YTR6</accession>
<reference key="1">
    <citation type="journal article" date="1995" name="Virus Res.">
        <title>Sequence analysis of putative pVIII, E3 and fibre regions of porcine adenovirus type 3.</title>
        <authorList>
            <person name="Reddy P.S."/>
            <person name="Nagy E."/>
            <person name="Derbyshire J.B."/>
        </authorList>
    </citation>
    <scope>NUCLEOTIDE SEQUENCE [GENOMIC DNA]</scope>
    <source>
        <strain>6618</strain>
    </source>
</reference>
<reference key="2">
    <citation type="journal article" date="1998" name="Virology">
        <title>Nucleotide sequence and transcription map of porcine adenovirus type 3.</title>
        <authorList>
            <person name="Reddy P.S."/>
            <person name="Idamakanti N."/>
            <person name="Song J.Y."/>
            <person name="Lee J.B."/>
            <person name="Hyun B.H."/>
            <person name="Park J.H."/>
            <person name="Cha S.H."/>
            <person name="Bae Y.T."/>
            <person name="Tikoo S.K."/>
            <person name="Babiuk L.A."/>
        </authorList>
    </citation>
    <scope>NUCLEOTIDE SEQUENCE [GENOMIC DNA]</scope>
    <source>
        <strain>6618</strain>
    </source>
</reference>
<reference key="3">
    <citation type="submission" date="1999-02" db="EMBL/GenBank/DDBJ databases">
        <title>Porcine adenovirus serotype 3, complete genome.</title>
        <authorList>
            <person name="Larocque D."/>
            <person name="Malenfant F."/>
            <person name="Massie B."/>
            <person name="Dea S."/>
        </authorList>
    </citation>
    <scope>NUCLEOTIDE SEQUENCE [LARGE SCALE GENOMIC DNA]</scope>
    <source>
        <strain>6618 / IAF</strain>
    </source>
</reference>
<sequence>MSKQIPTPYMWSYQPQSGRAAGASVDYSTRMNWLSAGPSMIGQVNDIRHTRNQILIRQALITETPRPVQNPPSWPASLLPQMTQPPTHLHLPRNEILEGRLTDAGMQLAGGGALAPRDLYALTLRGRGIQLNEDLPLSASTLRPDGIFQLGGGGRSSFNPTDAYLTLQNSSSLPRSGGIGSEQFVREFVPTVYINPFSGPPGTYPDQFIANYNILTDSVAGYD</sequence>
<dbReference type="EMBL" id="AF083132">
    <property type="protein sequence ID" value="AAC99446.1"/>
    <property type="molecule type" value="Genomic_DNA"/>
</dbReference>
<dbReference type="EMBL" id="AJ237815">
    <property type="protein sequence ID" value="CAB41034.1"/>
    <property type="molecule type" value="Genomic_DNA"/>
</dbReference>
<dbReference type="EMBL" id="AB026117">
    <property type="protein sequence ID" value="BAA76972.1"/>
    <property type="molecule type" value="Genomic_DNA"/>
</dbReference>
<dbReference type="RefSeq" id="YP_009216.1">
    <property type="nucleotide sequence ID" value="AC_000189.1"/>
</dbReference>
<dbReference type="SMR" id="Q83453"/>
<dbReference type="OrthoDB" id="8443at10239"/>
<dbReference type="Proteomes" id="UP000101284">
    <property type="component" value="Genome"/>
</dbReference>
<dbReference type="Proteomes" id="UP000130591">
    <property type="component" value="Genome"/>
</dbReference>
<dbReference type="Proteomes" id="UP000148028">
    <property type="component" value="Genome"/>
</dbReference>
<dbReference type="GO" id="GO:0042025">
    <property type="term" value="C:host cell nucleus"/>
    <property type="evidence" value="ECO:0007669"/>
    <property type="project" value="UniProtKB-SubCell"/>
</dbReference>
<dbReference type="GO" id="GO:0019028">
    <property type="term" value="C:viral capsid"/>
    <property type="evidence" value="ECO:0007669"/>
    <property type="project" value="UniProtKB-UniRule"/>
</dbReference>
<dbReference type="GO" id="GO:0031423">
    <property type="term" value="F:hexon binding"/>
    <property type="evidence" value="ECO:0007669"/>
    <property type="project" value="InterPro"/>
</dbReference>
<dbReference type="Gene3D" id="6.10.250.1460">
    <property type="match status" value="1"/>
</dbReference>
<dbReference type="HAMAP" id="MF_04049">
    <property type="entry name" value="ADV_CAP8"/>
    <property type="match status" value="1"/>
</dbReference>
<dbReference type="InterPro" id="IPR000646">
    <property type="entry name" value="Adeno_PVIII"/>
</dbReference>
<dbReference type="Pfam" id="PF01310">
    <property type="entry name" value="Adeno_PVIII"/>
    <property type="match status" value="1"/>
</dbReference>
<comment type="function">
    <molecule>Hexon-linking protein-N</molecule>
    <text evidence="1">Structural component of the virion that acts as a cement protein on the capsid interior and which glue the peripentonal hexons and group-of-nine hexons together.</text>
</comment>
<comment type="function">
    <molecule>Hexon-linking protein-C</molecule>
    <text evidence="1">Structural component of the virion that acts as a cement protein on the capsid interior and which glue the peripentonal hexons and group-of-nine hexons together.</text>
</comment>
<comment type="subunit">
    <text evidence="1">Interacts with the peripentonal hexons as well as the hexons in the facets. Part of a complex composed of the core-capsid bridging protein, the endosome lysis protein VI and the hexon-linking protein VIII; these interactions bridge the virus core to the capsid.</text>
</comment>
<comment type="subcellular location">
    <molecule>Hexon-linking protein-C</molecule>
    <subcellularLocation>
        <location evidence="1">Virion</location>
    </subcellularLocation>
    <text evidence="1">Located on the inner side of the capsid shell. Present in 120 copies per virion.</text>
</comment>
<comment type="subcellular location">
    <molecule>Pre-hexon-linking protein VIII</molecule>
    <subcellularLocation>
        <location evidence="1">Host nucleus</location>
    </subcellularLocation>
</comment>
<comment type="subcellular location">
    <molecule>Hexon-linking protein-N</molecule>
    <subcellularLocation>
        <location evidence="1">Virion</location>
    </subcellularLocation>
    <text evidence="1">Located on the inner side of the capsid shell. Present in 120 copies per virion.</text>
</comment>
<comment type="induction">
    <text evidence="1">Expressed in the late phase of the viral replicative cycle.</text>
</comment>
<comment type="PTM">
    <text evidence="1">Cleaved by the viral protease during virion maturation. May cause the middle segment to be shed from the capsid.</text>
</comment>
<comment type="miscellaneous">
    <text evidence="1">All late proteins expressed from the major late promoter are produced by alternative splicing and alternative polyadenylation of the same gene giving rise to non-overlapping ORFs. A leader sequence is present in the N-terminus of all these mRNAs and is recognized by the viral shutoff protein to provide expression although conventional translation via ribosome scanning from the cap has been shut off in the host cell.</text>
</comment>
<comment type="similarity">
    <text evidence="1 2">Belongs to the adenoviridae hexon-linking protein family.</text>
</comment>
<keyword id="KW-0167">Capsid protein</keyword>
<keyword id="KW-1048">Host nucleus</keyword>
<keyword id="KW-0426">Late protein</keyword>
<keyword id="KW-0597">Phosphoprotein</keyword>
<keyword id="KW-1185">Reference proteome</keyword>
<keyword id="KW-0946">Virion</keyword>
<protein>
    <recommendedName>
        <fullName evidence="1">Pre-hexon-linking protein VIII</fullName>
    </recommendedName>
    <alternativeName>
        <fullName evidence="1">Pre-protein VIII</fullName>
        <shortName evidence="1">pVIII</shortName>
    </alternativeName>
    <component>
        <recommendedName>
            <fullName evidence="1">Hexon-linking protein-N</fullName>
        </recommendedName>
        <alternativeName>
            <fullName evidence="1">12.1 kDa protein VIII</fullName>
        </alternativeName>
        <alternativeName>
            <fullName evidence="1">Protein VIII-N</fullName>
        </alternativeName>
    </component>
    <component>
        <recommendedName>
            <fullName evidence="1">Hexon-linking protein-C</fullName>
        </recommendedName>
        <alternativeName>
            <fullName evidence="1">7.6 kDa protein VIII</fullName>
        </alternativeName>
        <alternativeName>
            <fullName evidence="1">Protein VIII-C</fullName>
        </alternativeName>
    </component>
</protein>
<proteinExistence type="inferred from homology"/>
<feature type="chain" id="PRO_0000421422" description="Pre-hexon-linking protein VIII" evidence="1">
    <location>
        <begin position="1"/>
        <end position="223"/>
    </location>
</feature>
<feature type="peptide" id="PRO_0000421423" description="Hexon-linking protein-N" evidence="1">
    <location>
        <begin position="1"/>
        <end position="111"/>
    </location>
</feature>
<feature type="propeptide" id="PRO_0000036515" evidence="1">
    <location>
        <begin position="112"/>
        <end position="153"/>
    </location>
</feature>
<feature type="peptide" id="PRO_0000036516" description="Hexon-linking protein-C" evidence="1">
    <location>
        <begin position="154"/>
        <end position="223"/>
    </location>
</feature>
<feature type="site" description="Cleavage; by viral protease" evidence="1">
    <location>
        <begin position="111"/>
        <end position="112"/>
    </location>
</feature>
<feature type="site" description="Cleavage; by viral protease" evidence="1">
    <location>
        <begin position="153"/>
        <end position="154"/>
    </location>
</feature>
<feature type="modified residue" description="Phosphothreonine; by host" evidence="1">
    <location>
        <position position="64"/>
    </location>
</feature>
<feature type="modified residue" description="Phosphoserine; by host" evidence="1">
    <location>
        <position position="170"/>
    </location>
</feature>
<evidence type="ECO:0000255" key="1">
    <source>
        <dbReference type="HAMAP-Rule" id="MF_04049"/>
    </source>
</evidence>
<evidence type="ECO:0000305" key="2"/>
<organismHost>
    <name type="scientific">Sus scrofa</name>
    <name type="common">Pig</name>
    <dbReference type="NCBI Taxonomy" id="9823"/>
</organismHost>